<gene>
    <name type="primary">sec74</name>
    <name type="ORF">SPAC26F1.01</name>
    <name type="ORF">SPAPJ691.01c</name>
</gene>
<accession>Q10491</accession>
<accession>Q9URW4</accession>
<accession>Q9UU74</accession>
<feature type="chain" id="PRO_0000120221" description="Arf guanine nucleotide exchange factor sec74">
    <location>
        <begin position="1"/>
        <end position="928"/>
    </location>
</feature>
<feature type="domain" description="SEC7" evidence="3">
    <location>
        <begin position="228"/>
        <end position="420"/>
    </location>
</feature>
<feature type="domain" description="PH" evidence="2">
    <location>
        <begin position="548"/>
        <end position="677"/>
    </location>
</feature>
<feature type="region of interest" description="Disordered" evidence="4">
    <location>
        <begin position="1"/>
        <end position="152"/>
    </location>
</feature>
<feature type="region of interest" description="Disordered" evidence="4">
    <location>
        <begin position="227"/>
        <end position="249"/>
    </location>
</feature>
<feature type="compositionally biased region" description="Polar residues" evidence="4">
    <location>
        <begin position="1"/>
        <end position="12"/>
    </location>
</feature>
<feature type="compositionally biased region" description="Polar residues" evidence="4">
    <location>
        <begin position="57"/>
        <end position="83"/>
    </location>
</feature>
<feature type="compositionally biased region" description="Low complexity" evidence="4">
    <location>
        <begin position="89"/>
        <end position="102"/>
    </location>
</feature>
<feature type="compositionally biased region" description="Low complexity" evidence="4">
    <location>
        <begin position="115"/>
        <end position="132"/>
    </location>
</feature>
<feature type="compositionally biased region" description="Polar residues" evidence="4">
    <location>
        <begin position="234"/>
        <end position="245"/>
    </location>
</feature>
<feature type="modified residue" description="Phosphoserine" evidence="6">
    <location>
        <position position="67"/>
    </location>
</feature>
<sequence>MDESSRIASSSALHGLDEMVSAHKPSPPLPSRRKGKSALRSALEKKNRKSKSKPKVTITSDTPKVSSQHSPVSSAYTGDSTTDLDSKSGHSSSQKLSNKVSSALKLTIPKRWRSSKSSSSQCSSPFLPTSSSNGHGDDASLNLPDKKSRPSSQSSIFLSNWSTIFSSNASPTDSQLSPTHTSTIAELAASTLSIFPSGSYAGSTFGSPSRSSIDSSTYLPRSKSVNSLSSNFSARTPASNQSSVSEDFGAAPNCDHKHNSVTLSDFALPDIDQHDTVETILEKVEFTIPKQFTPAILSQGTSSLLKLCLRKYLSVVNFKCISLDMALRKFLAVYVLPNETQQIDRVLSTFSDQYFHCNPDLYDSSDECYILTFSLMILHTDFFNIHNRQKMTRAEFISNTNLPTILPEILECFYDNITYTPFVHVEHIGCVVTSPSNEKPSLSQRLGDSQFRLTKRNTFATESDHQALQEQLTGFRINLDSILDLKKIDSVRTSIESPTRTADDLYKEFARAPFLQIVSHRSQPQAFSYHFEPSAESESTNPAIINVKVFKLGILIQNEKVRKDRLLSNREVGVILTSSQLMFFKNVYWISGLLDQLEDFKRSHSFSPCYFSPHLTSLSADYIIPLSDLVAYGDGSRIENELYSFSVKQKNQRTHVFSVTNVDELNDWLVKINFVSTFATAGLAPRERLPCVESSDKSIKASVSVLPDIYEDSDAMSKASKETRSEVLECSKVRVYIVQNRIYKLEEALRQGESKMTVQRRNAANILHLEPIQSRTRIRLARCSNTLKKNMLAQMIEIQKFKISIKFLKEDLEMDSHLQDYLRSVFPSSVMGKENASEDTILESNFRNHSNPSVRRSNLRVGKTVESVQNTKLKSVENDSGKAETETVGKNPEVVRKSPAKLPNIANIMTVNGHRYSVVELPDDFLRE</sequence>
<proteinExistence type="evidence at protein level"/>
<dbReference type="EMBL" id="CU329670">
    <property type="protein sequence ID" value="CAA97358.2"/>
    <property type="molecule type" value="Genomic_DNA"/>
</dbReference>
<dbReference type="EMBL" id="AB027773">
    <property type="protein sequence ID" value="BAA87077.1"/>
    <property type="molecule type" value="Genomic_DNA"/>
</dbReference>
<dbReference type="PIR" id="T38419">
    <property type="entry name" value="T38419"/>
</dbReference>
<dbReference type="RefSeq" id="NP_594894.2">
    <property type="nucleotide sequence ID" value="NM_001020323.2"/>
</dbReference>
<dbReference type="SMR" id="Q10491"/>
<dbReference type="BioGRID" id="278550">
    <property type="interactions" value="17"/>
</dbReference>
<dbReference type="STRING" id="284812.Q10491"/>
<dbReference type="iPTMnet" id="Q10491"/>
<dbReference type="PaxDb" id="4896-SPAC26F1.01.1"/>
<dbReference type="EnsemblFungi" id="SPAC26F1.01.1">
    <property type="protein sequence ID" value="SPAC26F1.01.1:pep"/>
    <property type="gene ID" value="SPAC26F1.01"/>
</dbReference>
<dbReference type="GeneID" id="2542073"/>
<dbReference type="KEGG" id="spo:2542073"/>
<dbReference type="PomBase" id="SPAC26F1.01">
    <property type="gene designation" value="sec74"/>
</dbReference>
<dbReference type="VEuPathDB" id="FungiDB:SPAC26F1.01"/>
<dbReference type="eggNOG" id="KOG0929">
    <property type="taxonomic scope" value="Eukaryota"/>
</dbReference>
<dbReference type="HOGENOM" id="CLU_315269_0_0_1"/>
<dbReference type="InParanoid" id="Q10491"/>
<dbReference type="OMA" id="SSDECYI"/>
<dbReference type="PhylomeDB" id="Q10491"/>
<dbReference type="PRO" id="PR:Q10491"/>
<dbReference type="Proteomes" id="UP000002485">
    <property type="component" value="Chromosome I"/>
</dbReference>
<dbReference type="GO" id="GO:0032153">
    <property type="term" value="C:cell division site"/>
    <property type="evidence" value="ECO:0007005"/>
    <property type="project" value="PomBase"/>
</dbReference>
<dbReference type="GO" id="GO:0051286">
    <property type="term" value="C:cell tip"/>
    <property type="evidence" value="ECO:0007005"/>
    <property type="project" value="PomBase"/>
</dbReference>
<dbReference type="GO" id="GO:0005829">
    <property type="term" value="C:cytosol"/>
    <property type="evidence" value="ECO:0007005"/>
    <property type="project" value="PomBase"/>
</dbReference>
<dbReference type="GO" id="GO:0005085">
    <property type="term" value="F:guanyl-nucleotide exchange factor activity"/>
    <property type="evidence" value="ECO:0000266"/>
    <property type="project" value="PomBase"/>
</dbReference>
<dbReference type="GO" id="GO:0008289">
    <property type="term" value="F:lipid binding"/>
    <property type="evidence" value="ECO:0000255"/>
    <property type="project" value="PomBase"/>
</dbReference>
<dbReference type="GO" id="GO:0006887">
    <property type="term" value="P:exocytosis"/>
    <property type="evidence" value="ECO:0000266"/>
    <property type="project" value="PomBase"/>
</dbReference>
<dbReference type="GO" id="GO:0006886">
    <property type="term" value="P:intracellular protein transport"/>
    <property type="evidence" value="ECO:0000305"/>
    <property type="project" value="PomBase"/>
</dbReference>
<dbReference type="GO" id="GO:0032012">
    <property type="term" value="P:regulation of ARF protein signal transduction"/>
    <property type="evidence" value="ECO:0007669"/>
    <property type="project" value="InterPro"/>
</dbReference>
<dbReference type="FunFam" id="2.30.29.30:FF:001021">
    <property type="entry name" value="Arf guanine nucleotide exchange factor sec74"/>
    <property type="match status" value="1"/>
</dbReference>
<dbReference type="FunFam" id="1.10.1000.11:FF:000002">
    <property type="entry name" value="Cytohesin 1"/>
    <property type="match status" value="1"/>
</dbReference>
<dbReference type="Gene3D" id="1.10.1000.11">
    <property type="entry name" value="Arf Nucleotide-binding Site Opener,domain 2"/>
    <property type="match status" value="1"/>
</dbReference>
<dbReference type="Gene3D" id="2.30.29.30">
    <property type="entry name" value="Pleckstrin-homology domain (PH domain)/Phosphotyrosine-binding domain (PTB)"/>
    <property type="match status" value="1"/>
</dbReference>
<dbReference type="InterPro" id="IPR011993">
    <property type="entry name" value="PH-like_dom_sf"/>
</dbReference>
<dbReference type="InterPro" id="IPR001849">
    <property type="entry name" value="PH_domain"/>
</dbReference>
<dbReference type="InterPro" id="IPR023394">
    <property type="entry name" value="Sec7_C_sf"/>
</dbReference>
<dbReference type="InterPro" id="IPR000904">
    <property type="entry name" value="Sec7_dom"/>
</dbReference>
<dbReference type="InterPro" id="IPR035999">
    <property type="entry name" value="Sec7_dom_sf"/>
</dbReference>
<dbReference type="PANTHER" id="PTHR10663">
    <property type="entry name" value="GUANYL-NUCLEOTIDE EXCHANGE FACTOR"/>
    <property type="match status" value="1"/>
</dbReference>
<dbReference type="PANTHER" id="PTHR10663:SF333">
    <property type="entry name" value="PROTEIN MON2 HOMOLOG"/>
    <property type="match status" value="1"/>
</dbReference>
<dbReference type="Pfam" id="PF00169">
    <property type="entry name" value="PH"/>
    <property type="match status" value="1"/>
</dbReference>
<dbReference type="Pfam" id="PF01369">
    <property type="entry name" value="Sec7"/>
    <property type="match status" value="1"/>
</dbReference>
<dbReference type="SMART" id="SM00233">
    <property type="entry name" value="PH"/>
    <property type="match status" value="1"/>
</dbReference>
<dbReference type="SMART" id="SM00222">
    <property type="entry name" value="Sec7"/>
    <property type="match status" value="1"/>
</dbReference>
<dbReference type="SUPFAM" id="SSF50729">
    <property type="entry name" value="PH domain-like"/>
    <property type="match status" value="1"/>
</dbReference>
<dbReference type="SUPFAM" id="SSF48425">
    <property type="entry name" value="Sec7 domain"/>
    <property type="match status" value="1"/>
</dbReference>
<dbReference type="PROSITE" id="PS50003">
    <property type="entry name" value="PH_DOMAIN"/>
    <property type="match status" value="1"/>
</dbReference>
<dbReference type="PROSITE" id="PS50190">
    <property type="entry name" value="SEC7"/>
    <property type="match status" value="1"/>
</dbReference>
<comment type="function">
    <text evidence="1">Guanine nucleotide exchange factor for Arf GTPases, stimulating the nucleotide exchange from the GDP-bound to the GTP-bound form. Involved in vesicular transport (By similarity).</text>
</comment>
<comment type="subcellular location">
    <subcellularLocation>
        <location evidence="5">Cytoplasm</location>
    </subcellularLocation>
    <subcellularLocation>
        <location evidence="5">Cell tip</location>
    </subcellularLocation>
</comment>
<comment type="domain">
    <text evidence="1">The SEC7 domain is sufficient for nucleotide exchange activity.</text>
</comment>
<organism>
    <name type="scientific">Schizosaccharomyces pombe (strain 972 / ATCC 24843)</name>
    <name type="common">Fission yeast</name>
    <dbReference type="NCBI Taxonomy" id="284812"/>
    <lineage>
        <taxon>Eukaryota</taxon>
        <taxon>Fungi</taxon>
        <taxon>Dikarya</taxon>
        <taxon>Ascomycota</taxon>
        <taxon>Taphrinomycotina</taxon>
        <taxon>Schizosaccharomycetes</taxon>
        <taxon>Schizosaccharomycetales</taxon>
        <taxon>Schizosaccharomycetaceae</taxon>
        <taxon>Schizosaccharomyces</taxon>
    </lineage>
</organism>
<evidence type="ECO:0000250" key="1"/>
<evidence type="ECO:0000255" key="2">
    <source>
        <dbReference type="PROSITE-ProRule" id="PRU00145"/>
    </source>
</evidence>
<evidence type="ECO:0000255" key="3">
    <source>
        <dbReference type="PROSITE-ProRule" id="PRU00189"/>
    </source>
</evidence>
<evidence type="ECO:0000256" key="4">
    <source>
        <dbReference type="SAM" id="MobiDB-lite"/>
    </source>
</evidence>
<evidence type="ECO:0000269" key="5">
    <source>
    </source>
</evidence>
<evidence type="ECO:0000269" key="6">
    <source>
    </source>
</evidence>
<name>SEC74_SCHPO</name>
<reference key="1">
    <citation type="journal article" date="2002" name="Nature">
        <title>The genome sequence of Schizosaccharomyces pombe.</title>
        <authorList>
            <person name="Wood V."/>
            <person name="Gwilliam R."/>
            <person name="Rajandream M.A."/>
            <person name="Lyne M.H."/>
            <person name="Lyne R."/>
            <person name="Stewart A."/>
            <person name="Sgouros J.G."/>
            <person name="Peat N."/>
            <person name="Hayles J."/>
            <person name="Baker S.G."/>
            <person name="Basham D."/>
            <person name="Bowman S."/>
            <person name="Brooks K."/>
            <person name="Brown D."/>
            <person name="Brown S."/>
            <person name="Chillingworth T."/>
            <person name="Churcher C.M."/>
            <person name="Collins M."/>
            <person name="Connor R."/>
            <person name="Cronin A."/>
            <person name="Davis P."/>
            <person name="Feltwell T."/>
            <person name="Fraser A."/>
            <person name="Gentles S."/>
            <person name="Goble A."/>
            <person name="Hamlin N."/>
            <person name="Harris D.E."/>
            <person name="Hidalgo J."/>
            <person name="Hodgson G."/>
            <person name="Holroyd S."/>
            <person name="Hornsby T."/>
            <person name="Howarth S."/>
            <person name="Huckle E.J."/>
            <person name="Hunt S."/>
            <person name="Jagels K."/>
            <person name="James K.D."/>
            <person name="Jones L."/>
            <person name="Jones M."/>
            <person name="Leather S."/>
            <person name="McDonald S."/>
            <person name="McLean J."/>
            <person name="Mooney P."/>
            <person name="Moule S."/>
            <person name="Mungall K.L."/>
            <person name="Murphy L.D."/>
            <person name="Niblett D."/>
            <person name="Odell C."/>
            <person name="Oliver K."/>
            <person name="O'Neil S."/>
            <person name="Pearson D."/>
            <person name="Quail M.A."/>
            <person name="Rabbinowitsch E."/>
            <person name="Rutherford K.M."/>
            <person name="Rutter S."/>
            <person name="Saunders D."/>
            <person name="Seeger K."/>
            <person name="Sharp S."/>
            <person name="Skelton J."/>
            <person name="Simmonds M.N."/>
            <person name="Squares R."/>
            <person name="Squares S."/>
            <person name="Stevens K."/>
            <person name="Taylor K."/>
            <person name="Taylor R.G."/>
            <person name="Tivey A."/>
            <person name="Walsh S.V."/>
            <person name="Warren T."/>
            <person name="Whitehead S."/>
            <person name="Woodward J.R."/>
            <person name="Volckaert G."/>
            <person name="Aert R."/>
            <person name="Robben J."/>
            <person name="Grymonprez B."/>
            <person name="Weltjens I."/>
            <person name="Vanstreels E."/>
            <person name="Rieger M."/>
            <person name="Schaefer M."/>
            <person name="Mueller-Auer S."/>
            <person name="Gabel C."/>
            <person name="Fuchs M."/>
            <person name="Duesterhoeft A."/>
            <person name="Fritzc C."/>
            <person name="Holzer E."/>
            <person name="Moestl D."/>
            <person name="Hilbert H."/>
            <person name="Borzym K."/>
            <person name="Langer I."/>
            <person name="Beck A."/>
            <person name="Lehrach H."/>
            <person name="Reinhardt R."/>
            <person name="Pohl T.M."/>
            <person name="Eger P."/>
            <person name="Zimmermann W."/>
            <person name="Wedler H."/>
            <person name="Wambutt R."/>
            <person name="Purnelle B."/>
            <person name="Goffeau A."/>
            <person name="Cadieu E."/>
            <person name="Dreano S."/>
            <person name="Gloux S."/>
            <person name="Lelaure V."/>
            <person name="Mottier S."/>
            <person name="Galibert F."/>
            <person name="Aves S.J."/>
            <person name="Xiang Z."/>
            <person name="Hunt C."/>
            <person name="Moore K."/>
            <person name="Hurst S.M."/>
            <person name="Lucas M."/>
            <person name="Rochet M."/>
            <person name="Gaillardin C."/>
            <person name="Tallada V.A."/>
            <person name="Garzon A."/>
            <person name="Thode G."/>
            <person name="Daga R.R."/>
            <person name="Cruzado L."/>
            <person name="Jimenez J."/>
            <person name="Sanchez M."/>
            <person name="del Rey F."/>
            <person name="Benito J."/>
            <person name="Dominguez A."/>
            <person name="Revuelta J.L."/>
            <person name="Moreno S."/>
            <person name="Armstrong J."/>
            <person name="Forsburg S.L."/>
            <person name="Cerutti L."/>
            <person name="Lowe T."/>
            <person name="McCombie W.R."/>
            <person name="Paulsen I."/>
            <person name="Potashkin J."/>
            <person name="Shpakovski G.V."/>
            <person name="Ussery D."/>
            <person name="Barrell B.G."/>
            <person name="Nurse P."/>
        </authorList>
    </citation>
    <scope>NUCLEOTIDE SEQUENCE [LARGE SCALE GENOMIC DNA]</scope>
    <source>
        <strain>972 / ATCC 24843</strain>
    </source>
</reference>
<reference key="2">
    <citation type="journal article" date="2000" name="Genes Cells">
        <title>Large-scale screening of intracellular protein localization in living fission yeast cells by the use of a GFP-fusion genomic DNA library.</title>
        <authorList>
            <person name="Ding D.-Q."/>
            <person name="Tomita Y."/>
            <person name="Yamamoto A."/>
            <person name="Chikashige Y."/>
            <person name="Haraguchi T."/>
            <person name="Hiraoka Y."/>
        </authorList>
    </citation>
    <scope>NUCLEOTIDE SEQUENCE [LARGE SCALE GENOMIC DNA] OF 53-207</scope>
    <source>
        <strain>ATCC 38364 / 968</strain>
    </source>
</reference>
<reference key="3">
    <citation type="journal article" date="2006" name="Nat. Biotechnol.">
        <title>ORFeome cloning and global analysis of protein localization in the fission yeast Schizosaccharomyces pombe.</title>
        <authorList>
            <person name="Matsuyama A."/>
            <person name="Arai R."/>
            <person name="Yashiroda Y."/>
            <person name="Shirai A."/>
            <person name="Kamata A."/>
            <person name="Sekido S."/>
            <person name="Kobayashi Y."/>
            <person name="Hashimoto A."/>
            <person name="Hamamoto M."/>
            <person name="Hiraoka Y."/>
            <person name="Horinouchi S."/>
            <person name="Yoshida M."/>
        </authorList>
    </citation>
    <scope>SUBCELLULAR LOCATION [LARGE SCALE ANALYSIS]</scope>
</reference>
<reference key="4">
    <citation type="journal article" date="2008" name="J. Proteome Res.">
        <title>Phosphoproteome analysis of fission yeast.</title>
        <authorList>
            <person name="Wilson-Grady J.T."/>
            <person name="Villen J."/>
            <person name="Gygi S.P."/>
        </authorList>
    </citation>
    <scope>PHOSPHORYLATION [LARGE SCALE ANALYSIS] AT SER-67</scope>
    <scope>IDENTIFICATION BY MASS SPECTROMETRY</scope>
</reference>
<keyword id="KW-0963">Cytoplasm</keyword>
<keyword id="KW-0344">Guanine-nucleotide releasing factor</keyword>
<keyword id="KW-0597">Phosphoprotein</keyword>
<keyword id="KW-1185">Reference proteome</keyword>
<protein>
    <recommendedName>
        <fullName>Arf guanine nucleotide exchange factor sec74</fullName>
    </recommendedName>
</protein>